<comment type="function">
    <text evidence="1 3">Effector component of the alkene monooxygenase multicomponent enzyme system which catalyzes the O2- and NADH-dependent epoxidation of short chain (C2 to C6) alkenes to their corresponding epoxides (PubMed:10103255, PubMed:9312093). One possible role of this small protein might be to facilitate electron transfer between the reductase and ferredoxin components (PubMed:9312093).</text>
</comment>
<comment type="subunit">
    <text evidence="3">Monomer. The alkene monooxygenase multicomponent enzyme system is composed of an electron transfer component and a monooxygenase component interacting with the effector protein XamoD. The electron transfer component is composed of a ferredoxin reductase (XamoF) and a ferredoxin (XamoC), and the monooxygenase component is formed by a heterohexamer (dimer of heterotrimers) of two alpha subunits (XamoA), two beta subunits (XamoE) and two gamma subunits (XamoB).</text>
</comment>
<comment type="subcellular location">
    <subcellularLocation>
        <location evidence="7">Cytoplasm</location>
    </subcellularLocation>
</comment>
<comment type="induction">
    <text evidence="2">Induced during growth on aliphatic alkenes (such as propylene, ethylene and 1-butylene), epoxides (such as propylene oxide and 1,2-epoxybutane) and chlorinated alkenes and epoxides (such as vinyl chloride, cis- and trans-1,2-dichloroethylene, 1-chloropropylene, 1,3-dichloropropylene, epichlorohydrin, and epifluorohydrin). Repressed during growth on other carbon sources.</text>
</comment>
<comment type="similarity">
    <text evidence="6">Belongs to the TmoD/XamoD family.</text>
</comment>
<name>XAMOD_XANP2</name>
<proteinExistence type="evidence at protein level"/>
<protein>
    <recommendedName>
        <fullName evidence="4">Alkene monooxygenase system, effector subunit</fullName>
    </recommendedName>
    <alternativeName>
        <fullName evidence="5">Alkene monooxygenase 11 kDa subunit</fullName>
    </alternativeName>
</protein>
<accession>Q9ZET4</accession>
<evidence type="ECO:0000269" key="1">
    <source>
    </source>
</evidence>
<evidence type="ECO:0000269" key="2">
    <source>
    </source>
</evidence>
<evidence type="ECO:0000269" key="3">
    <source>
    </source>
</evidence>
<evidence type="ECO:0000303" key="4">
    <source>
    </source>
</evidence>
<evidence type="ECO:0000303" key="5">
    <source>
    </source>
</evidence>
<evidence type="ECO:0000305" key="6"/>
<evidence type="ECO:0000305" key="7">
    <source>
    </source>
</evidence>
<evidence type="ECO:0000312" key="8">
    <source>
        <dbReference type="EMBL" id="ABS70071.1"/>
    </source>
</evidence>
<evidence type="ECO:0000312" key="9">
    <source>
        <dbReference type="EMBL" id="CAA09914.1"/>
    </source>
</evidence>
<evidence type="ECO:0000312" key="10">
    <source>
        <dbReference type="Proteomes" id="UP000002417"/>
    </source>
</evidence>
<dbReference type="EMBL" id="AJ012090">
    <property type="protein sequence ID" value="CAA09914.1"/>
    <property type="molecule type" value="Genomic_DNA"/>
</dbReference>
<dbReference type="EMBL" id="CP000782">
    <property type="protein sequence ID" value="ABS70071.1"/>
    <property type="molecule type" value="Genomic_DNA"/>
</dbReference>
<dbReference type="SMR" id="Q9ZET4"/>
<dbReference type="KEGG" id="xau:Xaut_4860"/>
<dbReference type="eggNOG" id="COG3445">
    <property type="taxonomic scope" value="Bacteria"/>
</dbReference>
<dbReference type="HOGENOM" id="CLU_148539_1_0_5"/>
<dbReference type="OrthoDB" id="9805636at2"/>
<dbReference type="PhylomeDB" id="Q9ZET4"/>
<dbReference type="BioCyc" id="MetaCyc:MONOMER-13286"/>
<dbReference type="Proteomes" id="UP000002417">
    <property type="component" value="Plasmid pXAUT01"/>
</dbReference>
<dbReference type="GO" id="GO:0005737">
    <property type="term" value="C:cytoplasm"/>
    <property type="evidence" value="ECO:0007669"/>
    <property type="project" value="UniProtKB-SubCell"/>
</dbReference>
<dbReference type="GO" id="GO:0004497">
    <property type="term" value="F:monooxygenase activity"/>
    <property type="evidence" value="ECO:0007669"/>
    <property type="project" value="InterPro"/>
</dbReference>
<dbReference type="Gene3D" id="3.90.56.10">
    <property type="entry name" value="Monooxygenase component MmoB/DmpM"/>
    <property type="match status" value="1"/>
</dbReference>
<dbReference type="InterPro" id="IPR003454">
    <property type="entry name" value="MOase_MmoB_DmpM"/>
</dbReference>
<dbReference type="InterPro" id="IPR036889">
    <property type="entry name" value="mOase_MmoB_DmpM_sf"/>
</dbReference>
<dbReference type="Pfam" id="PF02406">
    <property type="entry name" value="MmoB_DmpM"/>
    <property type="match status" value="1"/>
</dbReference>
<dbReference type="SUPFAM" id="SSF56029">
    <property type="entry name" value="Monooxygenase (hydroxylase) regulatory protein"/>
    <property type="match status" value="1"/>
</dbReference>
<keyword id="KW-0963">Cytoplasm</keyword>
<keyword id="KW-0614">Plasmid</keyword>
<keyword id="KW-1185">Reference proteome</keyword>
<reference key="1">
    <citation type="journal article" date="1999" name="Appl. Environ. Microbiol.">
        <title>The alkene monooxygenase from Xanthobacter strain Py2 is closely related to aromatic monooxygenases and catalyzes aromatic monohydroxylation of benzene, toluene, and phenol.</title>
        <authorList>
            <person name="Zhou N.Y."/>
            <person name="Jenkins A."/>
            <person name="Chan Kwo Chion C.K."/>
            <person name="Leak D.J."/>
        </authorList>
    </citation>
    <scope>NUCLEOTIDE SEQUENCE [GENOMIC DNA]</scope>
    <scope>FUNCTION</scope>
    <source>
        <strain evidence="9">ATCC BAA-1158 / Py2</strain>
    </source>
</reference>
<reference key="2">
    <citation type="submission" date="2007-07" db="EMBL/GenBank/DDBJ databases">
        <title>Complete sequence of plasmid pXAUT01 of Xanthobacter autotrophicus Py2.</title>
        <authorList>
            <consortium name="US DOE Joint Genome Institute"/>
            <person name="Copeland A."/>
            <person name="Lucas S."/>
            <person name="Lapidus A."/>
            <person name="Barry K."/>
            <person name="Glavina del Rio T."/>
            <person name="Hammon N."/>
            <person name="Israni S."/>
            <person name="Dalin E."/>
            <person name="Tice H."/>
            <person name="Pitluck S."/>
            <person name="Sims D."/>
            <person name="Brettin T."/>
            <person name="Bruce D."/>
            <person name="Detter J.C."/>
            <person name="Han C."/>
            <person name="Tapia R."/>
            <person name="Brainard J."/>
            <person name="Schmutz J."/>
            <person name="Larimer F."/>
            <person name="Land M."/>
            <person name="Hauser L."/>
            <person name="Kyrpides N."/>
            <person name="Kim E."/>
            <person name="Ensigns S.A."/>
            <person name="Richardson P."/>
        </authorList>
    </citation>
    <scope>NUCLEOTIDE SEQUENCE [LARGE SCALE GENOMIC DNA]</scope>
    <source>
        <strain evidence="10">ATCC BAA-1158 / Py2</strain>
        <plasmid evidence="8">pXAUT01</plasmid>
    </source>
</reference>
<reference key="3">
    <citation type="journal article" date="1996" name="Appl. Environ. Microbiol.">
        <title>Aliphatic and chlorinated alkenes and epoxides as inducers of alkene monooxygenase and epoxidase activities in Xanthobacter strain Py2.</title>
        <authorList>
            <person name="Ensign S.A."/>
        </authorList>
    </citation>
    <scope>INDUCTION</scope>
    <source>
        <strain>ATCC BAA-1158 / Py2</strain>
    </source>
</reference>
<reference key="4">
    <citation type="journal article" date="1997" name="J. Biol. Chem.">
        <title>Alkene monooxygenase from Xanthobacter strain Py2. Purification and characterization of a four-component system central to the bacterial metabolism of aliphatic alkenes.</title>
        <authorList>
            <person name="Small F.J."/>
            <person name="Ensign S.A."/>
        </authorList>
    </citation>
    <scope>FUNCTION</scope>
    <scope>SUBCELLULAR LOCATION</scope>
    <scope>SUBUNIT</scope>
    <source>
        <strain>ATCC BAA-1158 / Py2</strain>
    </source>
</reference>
<sequence length="101" mass="11195">MSNATVDDMDENLVGPVIRAGDLADAVIDAVIADNPGKEVHVIERGDYVRIHTDRDCRLTRASIEQALGRSFVLAAIEAEMSSFKGRMSSSDSEMRWYYKS</sequence>
<geneLocation type="plasmid" evidence="8 10">
    <name>pXAUT01</name>
</geneLocation>
<organism>
    <name type="scientific">Xanthobacter autotrophicus (strain ATCC BAA-1158 / Py2)</name>
    <dbReference type="NCBI Taxonomy" id="78245"/>
    <lineage>
        <taxon>Bacteria</taxon>
        <taxon>Pseudomonadati</taxon>
        <taxon>Pseudomonadota</taxon>
        <taxon>Alphaproteobacteria</taxon>
        <taxon>Hyphomicrobiales</taxon>
        <taxon>Xanthobacteraceae</taxon>
        <taxon>Xanthobacter</taxon>
    </lineage>
</organism>
<feature type="chain" id="PRO_0000442693" description="Alkene monooxygenase system, effector subunit">
    <location>
        <begin position="1"/>
        <end position="101"/>
    </location>
</feature>
<gene>
    <name evidence="4 9" type="primary">xamoD</name>
    <name evidence="4" type="synonym">aamD</name>
    <name evidence="8" type="ordered locus">Xaut_4860</name>
</gene>